<sequence length="318" mass="33842">MKLSLIAQFLELPLPSIEKEIVGISSLEGATPDEISFVEQDRYASSLKESRAGAVLIRASLLSLVPQGCTPLVSAHPYLDMARLSKLFAKPPLGLNAQEPQIAPSAQIAPSATIGKGAVIGERTIVMAGAVIGEGVCLGEDCLIYPNVVIYRDTQIGNRVFIHAGSVIGSDGFGYAHTERGEHIKIHHNGIVVIEDDVELGANNCIDRAVFGETRIKRGTKIDNLVQIAHNCVLGEHSIVVSQVGLAGSTTTGRNVIFGGQSATSGHLHVGDFATIAARGGVSKSIEGKKTYAGFPLMEHKEWLKLQASLKHQLKKSQ</sequence>
<dbReference type="EC" id="2.3.1.191" evidence="1"/>
<dbReference type="EMBL" id="BX571657">
    <property type="protein sequence ID" value="CAE09268.1"/>
    <property type="molecule type" value="Genomic_DNA"/>
</dbReference>
<dbReference type="RefSeq" id="WP_011138068.1">
    <property type="nucleotide sequence ID" value="NC_005090.1"/>
</dbReference>
<dbReference type="SMR" id="Q7MAQ2"/>
<dbReference type="STRING" id="273121.WS0101"/>
<dbReference type="KEGG" id="wsu:WS0101"/>
<dbReference type="eggNOG" id="COG1044">
    <property type="taxonomic scope" value="Bacteria"/>
</dbReference>
<dbReference type="HOGENOM" id="CLU_049865_0_0_7"/>
<dbReference type="UniPathway" id="UPA00973"/>
<dbReference type="Proteomes" id="UP000000422">
    <property type="component" value="Chromosome"/>
</dbReference>
<dbReference type="GO" id="GO:0016020">
    <property type="term" value="C:membrane"/>
    <property type="evidence" value="ECO:0007669"/>
    <property type="project" value="GOC"/>
</dbReference>
<dbReference type="GO" id="GO:0016410">
    <property type="term" value="F:N-acyltransferase activity"/>
    <property type="evidence" value="ECO:0007669"/>
    <property type="project" value="InterPro"/>
</dbReference>
<dbReference type="GO" id="GO:0009245">
    <property type="term" value="P:lipid A biosynthetic process"/>
    <property type="evidence" value="ECO:0007669"/>
    <property type="project" value="UniProtKB-UniRule"/>
</dbReference>
<dbReference type="CDD" id="cd03352">
    <property type="entry name" value="LbH_LpxD"/>
    <property type="match status" value="1"/>
</dbReference>
<dbReference type="Gene3D" id="2.160.10.10">
    <property type="entry name" value="Hexapeptide repeat proteins"/>
    <property type="match status" value="1"/>
</dbReference>
<dbReference type="Gene3D" id="3.40.1390.10">
    <property type="entry name" value="MurE/MurF, N-terminal domain"/>
    <property type="match status" value="1"/>
</dbReference>
<dbReference type="HAMAP" id="MF_00523">
    <property type="entry name" value="LpxD"/>
    <property type="match status" value="1"/>
</dbReference>
<dbReference type="InterPro" id="IPR001451">
    <property type="entry name" value="Hexapep"/>
</dbReference>
<dbReference type="InterPro" id="IPR007691">
    <property type="entry name" value="LpxD"/>
</dbReference>
<dbReference type="InterPro" id="IPR011004">
    <property type="entry name" value="Trimer_LpxA-like_sf"/>
</dbReference>
<dbReference type="InterPro" id="IPR020573">
    <property type="entry name" value="UDP_GlcNAc_AcTrfase_non-rep"/>
</dbReference>
<dbReference type="NCBIfam" id="TIGR01853">
    <property type="entry name" value="lipid_A_lpxD"/>
    <property type="match status" value="1"/>
</dbReference>
<dbReference type="NCBIfam" id="NF002060">
    <property type="entry name" value="PRK00892.1"/>
    <property type="match status" value="1"/>
</dbReference>
<dbReference type="PANTHER" id="PTHR43378">
    <property type="entry name" value="UDP-3-O-ACYLGLUCOSAMINE N-ACYLTRANSFERASE"/>
    <property type="match status" value="1"/>
</dbReference>
<dbReference type="PANTHER" id="PTHR43378:SF2">
    <property type="entry name" value="UDP-3-O-ACYLGLUCOSAMINE N-ACYLTRANSFERASE 1, MITOCHONDRIAL-RELATED"/>
    <property type="match status" value="1"/>
</dbReference>
<dbReference type="Pfam" id="PF00132">
    <property type="entry name" value="Hexapep"/>
    <property type="match status" value="1"/>
</dbReference>
<dbReference type="Pfam" id="PF04613">
    <property type="entry name" value="LpxD"/>
    <property type="match status" value="1"/>
</dbReference>
<dbReference type="SUPFAM" id="SSF51161">
    <property type="entry name" value="Trimeric LpxA-like enzymes"/>
    <property type="match status" value="1"/>
</dbReference>
<feature type="chain" id="PRO_0000264456" description="UDP-3-O-acylglucosamine N-acyltransferase">
    <location>
        <begin position="1"/>
        <end position="318"/>
    </location>
</feature>
<feature type="active site" description="Proton acceptor" evidence="1">
    <location>
        <position position="230"/>
    </location>
</feature>
<name>LPXD_WOLSU</name>
<accession>Q7MAQ2</accession>
<evidence type="ECO:0000255" key="1">
    <source>
        <dbReference type="HAMAP-Rule" id="MF_00523"/>
    </source>
</evidence>
<reference key="1">
    <citation type="journal article" date="2003" name="Proc. Natl. Acad. Sci. U.S.A.">
        <title>Complete genome sequence and analysis of Wolinella succinogenes.</title>
        <authorList>
            <person name="Baar C."/>
            <person name="Eppinger M."/>
            <person name="Raddatz G."/>
            <person name="Simon J."/>
            <person name="Lanz C."/>
            <person name="Klimmek O."/>
            <person name="Nandakumar R."/>
            <person name="Gross R."/>
            <person name="Rosinus A."/>
            <person name="Keller H."/>
            <person name="Jagtap P."/>
            <person name="Linke B."/>
            <person name="Meyer F."/>
            <person name="Lederer H."/>
            <person name="Schuster S.C."/>
        </authorList>
    </citation>
    <scope>NUCLEOTIDE SEQUENCE [LARGE SCALE GENOMIC DNA]</scope>
    <source>
        <strain>ATCC 29543 / DSM 1740 / CCUG 13145 / JCM 31913 / LMG 7466 / NCTC 11488 / FDC 602W</strain>
    </source>
</reference>
<proteinExistence type="inferred from homology"/>
<organism>
    <name type="scientific">Wolinella succinogenes (strain ATCC 29543 / DSM 1740 / CCUG 13145 / JCM 31913 / LMG 7466 / NCTC 11488 / FDC 602W)</name>
    <name type="common">Vibrio succinogenes</name>
    <dbReference type="NCBI Taxonomy" id="273121"/>
    <lineage>
        <taxon>Bacteria</taxon>
        <taxon>Pseudomonadati</taxon>
        <taxon>Campylobacterota</taxon>
        <taxon>Epsilonproteobacteria</taxon>
        <taxon>Campylobacterales</taxon>
        <taxon>Helicobacteraceae</taxon>
        <taxon>Wolinella</taxon>
    </lineage>
</organism>
<comment type="function">
    <text evidence="1">Catalyzes the N-acylation of UDP-3-O-acylglucosamine using 3-hydroxyacyl-ACP as the acyl donor. Is involved in the biosynthesis of lipid A, a phosphorylated glycolipid that anchors the lipopolysaccharide to the outer membrane of the cell.</text>
</comment>
<comment type="catalytic activity">
    <reaction evidence="1">
        <text>a UDP-3-O-[(3R)-3-hydroxyacyl]-alpha-D-glucosamine + a (3R)-hydroxyacyl-[ACP] = a UDP-2-N,3-O-bis[(3R)-3-hydroxyacyl]-alpha-D-glucosamine + holo-[ACP] + H(+)</text>
        <dbReference type="Rhea" id="RHEA:53836"/>
        <dbReference type="Rhea" id="RHEA-COMP:9685"/>
        <dbReference type="Rhea" id="RHEA-COMP:9945"/>
        <dbReference type="ChEBI" id="CHEBI:15378"/>
        <dbReference type="ChEBI" id="CHEBI:64479"/>
        <dbReference type="ChEBI" id="CHEBI:78827"/>
        <dbReference type="ChEBI" id="CHEBI:137740"/>
        <dbReference type="ChEBI" id="CHEBI:137748"/>
        <dbReference type="EC" id="2.3.1.191"/>
    </reaction>
</comment>
<comment type="pathway">
    <text evidence="1">Bacterial outer membrane biogenesis; LPS lipid A biosynthesis.</text>
</comment>
<comment type="subunit">
    <text evidence="1">Homotrimer.</text>
</comment>
<comment type="similarity">
    <text evidence="1">Belongs to the transferase hexapeptide repeat family. LpxD subfamily.</text>
</comment>
<protein>
    <recommendedName>
        <fullName evidence="1">UDP-3-O-acylglucosamine N-acyltransferase</fullName>
        <ecNumber evidence="1">2.3.1.191</ecNumber>
    </recommendedName>
</protein>
<keyword id="KW-0012">Acyltransferase</keyword>
<keyword id="KW-0441">Lipid A biosynthesis</keyword>
<keyword id="KW-0444">Lipid biosynthesis</keyword>
<keyword id="KW-0443">Lipid metabolism</keyword>
<keyword id="KW-1185">Reference proteome</keyword>
<keyword id="KW-0677">Repeat</keyword>
<keyword id="KW-0808">Transferase</keyword>
<gene>
    <name evidence="1" type="primary">lpxD</name>
    <name type="ordered locus">WS0101</name>
</gene>